<protein>
    <recommendedName>
        <fullName evidence="1">1-(5-phosphoribosyl)-5-[(5-phosphoribosylamino)methylideneamino] imidazole-4-carboxamide isomerase</fullName>
        <ecNumber evidence="1">5.3.1.16</ecNumber>
    </recommendedName>
    <alternativeName>
        <fullName evidence="1">Phosphoribosylformimino-5-aminoimidazole carboxamide ribotide isomerase</fullName>
    </alternativeName>
</protein>
<comment type="catalytic activity">
    <reaction evidence="1">
        <text>1-(5-phospho-beta-D-ribosyl)-5-[(5-phospho-beta-D-ribosylamino)methylideneamino]imidazole-4-carboxamide = 5-[(5-phospho-1-deoxy-D-ribulos-1-ylimino)methylamino]-1-(5-phospho-beta-D-ribosyl)imidazole-4-carboxamide</text>
        <dbReference type="Rhea" id="RHEA:15469"/>
        <dbReference type="ChEBI" id="CHEBI:58435"/>
        <dbReference type="ChEBI" id="CHEBI:58525"/>
        <dbReference type="EC" id="5.3.1.16"/>
    </reaction>
</comment>
<comment type="pathway">
    <text evidence="1">Amino-acid biosynthesis; L-histidine biosynthesis; L-histidine from 5-phospho-alpha-D-ribose 1-diphosphate: step 4/9.</text>
</comment>
<comment type="subcellular location">
    <subcellularLocation>
        <location evidence="1">Cytoplasm</location>
    </subcellularLocation>
</comment>
<comment type="similarity">
    <text evidence="1">Belongs to the HisA/HisF family.</text>
</comment>
<gene>
    <name evidence="1" type="primary">hisA</name>
    <name type="ordered locus">BRADO0215</name>
</gene>
<reference key="1">
    <citation type="journal article" date="2007" name="Science">
        <title>Legumes symbioses: absence of nod genes in photosynthetic bradyrhizobia.</title>
        <authorList>
            <person name="Giraud E."/>
            <person name="Moulin L."/>
            <person name="Vallenet D."/>
            <person name="Barbe V."/>
            <person name="Cytryn E."/>
            <person name="Avarre J.-C."/>
            <person name="Jaubert M."/>
            <person name="Simon D."/>
            <person name="Cartieaux F."/>
            <person name="Prin Y."/>
            <person name="Bena G."/>
            <person name="Hannibal L."/>
            <person name="Fardoux J."/>
            <person name="Kojadinovic M."/>
            <person name="Vuillet L."/>
            <person name="Lajus A."/>
            <person name="Cruveiller S."/>
            <person name="Rouy Z."/>
            <person name="Mangenot S."/>
            <person name="Segurens B."/>
            <person name="Dossat C."/>
            <person name="Franck W.L."/>
            <person name="Chang W.-S."/>
            <person name="Saunders E."/>
            <person name="Bruce D."/>
            <person name="Richardson P."/>
            <person name="Normand P."/>
            <person name="Dreyfus B."/>
            <person name="Pignol D."/>
            <person name="Stacey G."/>
            <person name="Emerich D."/>
            <person name="Vermeglio A."/>
            <person name="Medigue C."/>
            <person name="Sadowsky M."/>
        </authorList>
    </citation>
    <scope>NUCLEOTIDE SEQUENCE [LARGE SCALE GENOMIC DNA]</scope>
    <source>
        <strain>ORS 278</strain>
    </source>
</reference>
<organism>
    <name type="scientific">Bradyrhizobium sp. (strain ORS 278)</name>
    <dbReference type="NCBI Taxonomy" id="114615"/>
    <lineage>
        <taxon>Bacteria</taxon>
        <taxon>Pseudomonadati</taxon>
        <taxon>Pseudomonadota</taxon>
        <taxon>Alphaproteobacteria</taxon>
        <taxon>Hyphomicrobiales</taxon>
        <taxon>Nitrobacteraceae</taxon>
        <taxon>Bradyrhizobium</taxon>
    </lineage>
</organism>
<accession>A4YJV4</accession>
<sequence length="244" mass="25576">MILFPAIDLKNGQCVRLEQGDMARATVFNLDPAAQAKSFADQGFEYLHVVDLDGAFAGKPMNAQAVEAMLKIVKMPVQLGGGIRDLKTVEAWLGKGITRVIIGTAAVRDPELVKMAAKAFPGRVAVGLDARDGKVAVEGWAETSEVTALDIAKRFEDAGVAAIIFTDIARDGLLKGLNLDATIALGDAISIPVIASGGLASIEDVKAMLTPRARKLEGAIAGRALYDGRLDPAEALALIRAISG</sequence>
<proteinExistence type="inferred from homology"/>
<evidence type="ECO:0000255" key="1">
    <source>
        <dbReference type="HAMAP-Rule" id="MF_01014"/>
    </source>
</evidence>
<keyword id="KW-0028">Amino-acid biosynthesis</keyword>
<keyword id="KW-0963">Cytoplasm</keyword>
<keyword id="KW-0368">Histidine biosynthesis</keyword>
<keyword id="KW-0413">Isomerase</keyword>
<keyword id="KW-1185">Reference proteome</keyword>
<feature type="chain" id="PRO_1000063188" description="1-(5-phosphoribosyl)-5-[(5-phosphoribosylamino)methylideneamino] imidazole-4-carboxamide isomerase">
    <location>
        <begin position="1"/>
        <end position="244"/>
    </location>
</feature>
<feature type="active site" description="Proton acceptor" evidence="1">
    <location>
        <position position="8"/>
    </location>
</feature>
<feature type="active site" description="Proton donor" evidence="1">
    <location>
        <position position="129"/>
    </location>
</feature>
<dbReference type="EC" id="5.3.1.16" evidence="1"/>
<dbReference type="EMBL" id="CU234118">
    <property type="protein sequence ID" value="CAL74180.1"/>
    <property type="molecule type" value="Genomic_DNA"/>
</dbReference>
<dbReference type="RefSeq" id="WP_011923468.1">
    <property type="nucleotide sequence ID" value="NC_009445.1"/>
</dbReference>
<dbReference type="SMR" id="A4YJV4"/>
<dbReference type="STRING" id="114615.BRADO0215"/>
<dbReference type="KEGG" id="bra:BRADO0215"/>
<dbReference type="eggNOG" id="COG0106">
    <property type="taxonomic scope" value="Bacteria"/>
</dbReference>
<dbReference type="HOGENOM" id="CLU_048577_1_1_5"/>
<dbReference type="OrthoDB" id="9807749at2"/>
<dbReference type="UniPathway" id="UPA00031">
    <property type="reaction ID" value="UER00009"/>
</dbReference>
<dbReference type="Proteomes" id="UP000001994">
    <property type="component" value="Chromosome"/>
</dbReference>
<dbReference type="GO" id="GO:0005737">
    <property type="term" value="C:cytoplasm"/>
    <property type="evidence" value="ECO:0007669"/>
    <property type="project" value="UniProtKB-SubCell"/>
</dbReference>
<dbReference type="GO" id="GO:0003949">
    <property type="term" value="F:1-(5-phosphoribosyl)-5-[(5-phosphoribosylamino)methylideneamino]imidazole-4-carboxamide isomerase activity"/>
    <property type="evidence" value="ECO:0007669"/>
    <property type="project" value="UniProtKB-UniRule"/>
</dbReference>
<dbReference type="GO" id="GO:0000105">
    <property type="term" value="P:L-histidine biosynthetic process"/>
    <property type="evidence" value="ECO:0007669"/>
    <property type="project" value="UniProtKB-UniRule"/>
</dbReference>
<dbReference type="GO" id="GO:0000162">
    <property type="term" value="P:L-tryptophan biosynthetic process"/>
    <property type="evidence" value="ECO:0007669"/>
    <property type="project" value="TreeGrafter"/>
</dbReference>
<dbReference type="CDD" id="cd04732">
    <property type="entry name" value="HisA"/>
    <property type="match status" value="1"/>
</dbReference>
<dbReference type="FunFam" id="3.20.20.70:FF:000009">
    <property type="entry name" value="1-(5-phosphoribosyl)-5-[(5-phosphoribosylamino)methylideneamino] imidazole-4-carboxamide isomerase"/>
    <property type="match status" value="1"/>
</dbReference>
<dbReference type="Gene3D" id="3.20.20.70">
    <property type="entry name" value="Aldolase class I"/>
    <property type="match status" value="1"/>
</dbReference>
<dbReference type="HAMAP" id="MF_01014">
    <property type="entry name" value="HisA"/>
    <property type="match status" value="1"/>
</dbReference>
<dbReference type="InterPro" id="IPR013785">
    <property type="entry name" value="Aldolase_TIM"/>
</dbReference>
<dbReference type="InterPro" id="IPR006062">
    <property type="entry name" value="His_biosynth"/>
</dbReference>
<dbReference type="InterPro" id="IPR006063">
    <property type="entry name" value="HisA_bact_arch"/>
</dbReference>
<dbReference type="InterPro" id="IPR044524">
    <property type="entry name" value="Isoase_HisA-like"/>
</dbReference>
<dbReference type="InterPro" id="IPR023016">
    <property type="entry name" value="Isoase_HisA-like_bact"/>
</dbReference>
<dbReference type="InterPro" id="IPR011060">
    <property type="entry name" value="RibuloseP-bd_barrel"/>
</dbReference>
<dbReference type="NCBIfam" id="TIGR00007">
    <property type="entry name" value="1-(5-phosphoribosyl)-5-[(5-phosphoribosylamino)methylideneamino]imidazole-4-carboxamide isomerase"/>
    <property type="match status" value="1"/>
</dbReference>
<dbReference type="NCBIfam" id="NF010112">
    <property type="entry name" value="PRK13585.1"/>
    <property type="match status" value="1"/>
</dbReference>
<dbReference type="PANTHER" id="PTHR43090">
    <property type="entry name" value="1-(5-PHOSPHORIBOSYL)-5-[(5-PHOSPHORIBOSYLAMINO)METHYLIDENEAMINO] IMIDAZOLE-4-CARBOXAMIDE ISOMERASE"/>
    <property type="match status" value="1"/>
</dbReference>
<dbReference type="PANTHER" id="PTHR43090:SF2">
    <property type="entry name" value="1-(5-PHOSPHORIBOSYL)-5-[(5-PHOSPHORIBOSYLAMINO)METHYLIDENEAMINO] IMIDAZOLE-4-CARBOXAMIDE ISOMERASE"/>
    <property type="match status" value="1"/>
</dbReference>
<dbReference type="Pfam" id="PF00977">
    <property type="entry name" value="His_biosynth"/>
    <property type="match status" value="1"/>
</dbReference>
<dbReference type="SUPFAM" id="SSF51366">
    <property type="entry name" value="Ribulose-phoshate binding barrel"/>
    <property type="match status" value="1"/>
</dbReference>
<name>HIS4_BRASO</name>